<organism>
    <name type="scientific">Pongo abelii</name>
    <name type="common">Sumatran orangutan</name>
    <name type="synonym">Pongo pygmaeus abelii</name>
    <dbReference type="NCBI Taxonomy" id="9601"/>
    <lineage>
        <taxon>Eukaryota</taxon>
        <taxon>Metazoa</taxon>
        <taxon>Chordata</taxon>
        <taxon>Craniata</taxon>
        <taxon>Vertebrata</taxon>
        <taxon>Euteleostomi</taxon>
        <taxon>Mammalia</taxon>
        <taxon>Eutheria</taxon>
        <taxon>Euarchontoglires</taxon>
        <taxon>Primates</taxon>
        <taxon>Haplorrhini</taxon>
        <taxon>Catarrhini</taxon>
        <taxon>Hominidae</taxon>
        <taxon>Pongo</taxon>
    </lineage>
</organism>
<name>RM16_PONAB</name>
<reference key="1">
    <citation type="submission" date="2004-11" db="EMBL/GenBank/DDBJ databases">
        <authorList>
            <consortium name="The German cDNA consortium"/>
        </authorList>
    </citation>
    <scope>NUCLEOTIDE SEQUENCE [LARGE SCALE MRNA]</scope>
    <source>
        <tissue>Heart</tissue>
    </source>
</reference>
<feature type="transit peptide" description="Mitochondrion" evidence="1">
    <location>
        <begin position="1"/>
        <end position="29"/>
    </location>
</feature>
<feature type="chain" id="PRO_0000239843" description="Large ribosomal subunit protein uL16m">
    <location>
        <begin position="30"/>
        <end position="251"/>
    </location>
</feature>
<sequence>MWRLLARASAPLLRVPLSDSWALLPASAGVKTLLPVPSFEDVSIPEKPKLRFIERAPLVPKVRREPKNLSDIRGPSTEATEFTEGNFAILALGGGYLHWGHFEMMRLTINRSMDPKNMFAIWRVPAPFKPITRKSVGHRMGGGKGAIDHYVTPVKAGRLVVEMGGRCEFEEVQGFLDQVAHKLPFAAKAVSRGTLEKMRKDQEERERNNQNPWTFERIATANMLGIRKVLSPYDLTHKGKYWGKFYMPKRV</sequence>
<accession>Q5R7L3</accession>
<gene>
    <name type="primary">MRPL16</name>
</gene>
<dbReference type="EMBL" id="CR860102">
    <property type="protein sequence ID" value="CAH92247.1"/>
    <property type="molecule type" value="mRNA"/>
</dbReference>
<dbReference type="RefSeq" id="NP_001126314.1">
    <property type="nucleotide sequence ID" value="NM_001132842.2"/>
</dbReference>
<dbReference type="SMR" id="Q5R7L3"/>
<dbReference type="FunCoup" id="Q5R7L3">
    <property type="interactions" value="1296"/>
</dbReference>
<dbReference type="STRING" id="9601.ENSPPYP00000003717"/>
<dbReference type="GeneID" id="100173293"/>
<dbReference type="KEGG" id="pon:100173293"/>
<dbReference type="CTD" id="54948"/>
<dbReference type="eggNOG" id="KOG3422">
    <property type="taxonomic scope" value="Eukaryota"/>
</dbReference>
<dbReference type="InParanoid" id="Q5R7L3"/>
<dbReference type="OrthoDB" id="268521at2759"/>
<dbReference type="Proteomes" id="UP000001595">
    <property type="component" value="Unplaced"/>
</dbReference>
<dbReference type="GO" id="GO:0005762">
    <property type="term" value="C:mitochondrial large ribosomal subunit"/>
    <property type="evidence" value="ECO:0000250"/>
    <property type="project" value="UniProtKB"/>
</dbReference>
<dbReference type="GO" id="GO:0019843">
    <property type="term" value="F:rRNA binding"/>
    <property type="evidence" value="ECO:0007669"/>
    <property type="project" value="InterPro"/>
</dbReference>
<dbReference type="GO" id="GO:0003735">
    <property type="term" value="F:structural constituent of ribosome"/>
    <property type="evidence" value="ECO:0007669"/>
    <property type="project" value="InterPro"/>
</dbReference>
<dbReference type="GO" id="GO:0032543">
    <property type="term" value="P:mitochondrial translation"/>
    <property type="evidence" value="ECO:0007669"/>
    <property type="project" value="TreeGrafter"/>
</dbReference>
<dbReference type="CDD" id="cd01433">
    <property type="entry name" value="Ribosomal_L16_L10e"/>
    <property type="match status" value="1"/>
</dbReference>
<dbReference type="FunFam" id="3.90.1170.10:FF:000005">
    <property type="entry name" value="39S ribosomal protein L16, mitochondrial"/>
    <property type="match status" value="1"/>
</dbReference>
<dbReference type="Gene3D" id="3.90.1170.10">
    <property type="entry name" value="Ribosomal protein L10e/L16"/>
    <property type="match status" value="1"/>
</dbReference>
<dbReference type="InterPro" id="IPR047873">
    <property type="entry name" value="Ribosomal_uL16"/>
</dbReference>
<dbReference type="InterPro" id="IPR000114">
    <property type="entry name" value="Ribosomal_uL16_bact-type"/>
</dbReference>
<dbReference type="InterPro" id="IPR016180">
    <property type="entry name" value="Ribosomal_uL16_dom"/>
</dbReference>
<dbReference type="InterPro" id="IPR036920">
    <property type="entry name" value="Ribosomal_uL16_sf"/>
</dbReference>
<dbReference type="PANTHER" id="PTHR12220">
    <property type="entry name" value="50S/60S RIBOSOMAL PROTEIN L16"/>
    <property type="match status" value="1"/>
</dbReference>
<dbReference type="PANTHER" id="PTHR12220:SF13">
    <property type="entry name" value="LARGE RIBOSOMAL SUBUNIT PROTEIN UL16M"/>
    <property type="match status" value="1"/>
</dbReference>
<dbReference type="Pfam" id="PF00252">
    <property type="entry name" value="Ribosomal_L16"/>
    <property type="match status" value="1"/>
</dbReference>
<dbReference type="PRINTS" id="PR00060">
    <property type="entry name" value="RIBOSOMALL16"/>
</dbReference>
<dbReference type="SUPFAM" id="SSF54686">
    <property type="entry name" value="Ribosomal protein L16p/L10e"/>
    <property type="match status" value="1"/>
</dbReference>
<comment type="subunit">
    <text evidence="2">Component of the mitochondrial ribosome large subunit (39S) which comprises a 16S rRNA and about 50 distinct proteins.</text>
</comment>
<comment type="subcellular location">
    <subcellularLocation>
        <location evidence="2">Mitochondrion</location>
    </subcellularLocation>
</comment>
<comment type="similarity">
    <text evidence="3">Belongs to the universal ribosomal protein uL16 family.</text>
</comment>
<evidence type="ECO:0000250" key="1">
    <source>
        <dbReference type="UniProtKB" id="Q3T0J3"/>
    </source>
</evidence>
<evidence type="ECO:0000250" key="2">
    <source>
        <dbReference type="UniProtKB" id="Q9NX20"/>
    </source>
</evidence>
<evidence type="ECO:0000305" key="3"/>
<keyword id="KW-0496">Mitochondrion</keyword>
<keyword id="KW-1185">Reference proteome</keyword>
<keyword id="KW-0687">Ribonucleoprotein</keyword>
<keyword id="KW-0689">Ribosomal protein</keyword>
<keyword id="KW-0809">Transit peptide</keyword>
<proteinExistence type="evidence at transcript level"/>
<protein>
    <recommendedName>
        <fullName evidence="3">Large ribosomal subunit protein uL16m</fullName>
    </recommendedName>
    <alternativeName>
        <fullName>39S ribosomal protein L16, mitochondrial</fullName>
        <shortName>L16mt</shortName>
        <shortName>MRP-L16</shortName>
    </alternativeName>
</protein>